<proteinExistence type="inferred from homology"/>
<name>ICAC_STAAS</name>
<keyword id="KW-1003">Cell membrane</keyword>
<keyword id="KW-0472">Membrane</keyword>
<keyword id="KW-0812">Transmembrane</keyword>
<keyword id="KW-1133">Transmembrane helix</keyword>
<keyword id="KW-0813">Transport</keyword>
<dbReference type="EMBL" id="BX571857">
    <property type="protein sequence ID" value="CAG44372.1"/>
    <property type="molecule type" value="Genomic_DNA"/>
</dbReference>
<dbReference type="RefSeq" id="WP_000723836.1">
    <property type="nucleotide sequence ID" value="NC_002953.3"/>
</dbReference>
<dbReference type="KEGG" id="sas:SAS2555"/>
<dbReference type="HOGENOM" id="CLU_064947_1_0_9"/>
<dbReference type="GO" id="GO:0005886">
    <property type="term" value="C:plasma membrane"/>
    <property type="evidence" value="ECO:0007669"/>
    <property type="project" value="UniProtKB-SubCell"/>
</dbReference>
<dbReference type="GO" id="GO:0016413">
    <property type="term" value="F:O-acetyltransferase activity"/>
    <property type="evidence" value="ECO:0007669"/>
    <property type="project" value="TreeGrafter"/>
</dbReference>
<dbReference type="GO" id="GO:0009246">
    <property type="term" value="P:enterobacterial common antigen biosynthetic process"/>
    <property type="evidence" value="ECO:0007669"/>
    <property type="project" value="TreeGrafter"/>
</dbReference>
<dbReference type="InterPro" id="IPR002656">
    <property type="entry name" value="Acyl_transf_3_dom"/>
</dbReference>
<dbReference type="PANTHER" id="PTHR40074">
    <property type="entry name" value="O-ACETYLTRANSFERASE WECH"/>
    <property type="match status" value="1"/>
</dbReference>
<dbReference type="PANTHER" id="PTHR40074:SF2">
    <property type="entry name" value="O-ACETYLTRANSFERASE WECH"/>
    <property type="match status" value="1"/>
</dbReference>
<dbReference type="Pfam" id="PF01757">
    <property type="entry name" value="Acyl_transf_3"/>
    <property type="match status" value="1"/>
</dbReference>
<organism>
    <name type="scientific">Staphylococcus aureus (strain MSSA476)</name>
    <dbReference type="NCBI Taxonomy" id="282459"/>
    <lineage>
        <taxon>Bacteria</taxon>
        <taxon>Bacillati</taxon>
        <taxon>Bacillota</taxon>
        <taxon>Bacilli</taxon>
        <taxon>Bacillales</taxon>
        <taxon>Staphylococcaceae</taxon>
        <taxon>Staphylococcus</taxon>
    </lineage>
</organism>
<accession>Q6G605</accession>
<comment type="function">
    <text evidence="1">Presumably involved in the export of the biofilm adhesin polysaccharide poly-beta-1,6-N-acetyl-D-glucosamine (PNAG, also referred to as PIA) across the cell membrane.</text>
</comment>
<comment type="subcellular location">
    <subcellularLocation>
        <location evidence="3">Cell membrane</location>
        <topology evidence="3">Multi-pass membrane protein</topology>
    </subcellularLocation>
</comment>
<comment type="similarity">
    <text evidence="3">Belongs to the acyltransferase 3 family.</text>
</comment>
<evidence type="ECO:0000250" key="1"/>
<evidence type="ECO:0000255" key="2"/>
<evidence type="ECO:0000305" key="3"/>
<sequence length="350" mass="41344">MKKIRLELVYLRAIICAIIIITHLLTQITLKHENMEGGSLVLQFYIRNIVIFGTPCFIILSQLLTTLNYQKVTYRYLTTRVKYILIPYILMGLFYSYSESLLTDSSFNKQFIENVLLGQWYGYFIVVIMQFFILSYIIFKINYNLFNSKILLLLSFILQQSFLYYFTNNTAFHDTVLHYYPLSENTIIFGWIFYFFLGAYMGYNYERVLNFLERYLVIMIVLAVATYFVFIALANGDYWNVTSFSYSLTPYNSIMFIVILGICTHFKTMLFNTIQMISAFSFFIYLLHPIILDSLFAYTNIFEDNTMVFLAISLLFILGLCIGVGMILREFYIFRFIIGKQPYKLNINAY</sequence>
<protein>
    <recommendedName>
        <fullName>Probable poly-beta-1,6-N-acetyl-D-glucosamine export protein</fullName>
        <shortName>PGA export protein</shortName>
        <shortName>Poly-beta-1,6-GlcNAc export protein</shortName>
    </recommendedName>
    <alternativeName>
        <fullName>Biofilm polysaccharide intercellular adhesin export protein</fullName>
        <shortName>Biofilm PIA export protein</shortName>
    </alternativeName>
    <alternativeName>
        <fullName>Intercellular adhesion protein C</fullName>
    </alternativeName>
</protein>
<feature type="chain" id="PRO_0000208075" description="Probable poly-beta-1,6-N-acetyl-D-glucosamine export protein">
    <location>
        <begin position="1"/>
        <end position="350"/>
    </location>
</feature>
<feature type="transmembrane region" description="Helical" evidence="2">
    <location>
        <begin position="7"/>
        <end position="29"/>
    </location>
</feature>
<feature type="transmembrane region" description="Helical" evidence="2">
    <location>
        <begin position="44"/>
        <end position="66"/>
    </location>
</feature>
<feature type="transmembrane region" description="Helical" evidence="2">
    <location>
        <begin position="79"/>
        <end position="101"/>
    </location>
</feature>
<feature type="transmembrane region" description="Helical" evidence="2">
    <location>
        <begin position="116"/>
        <end position="138"/>
    </location>
</feature>
<feature type="transmembrane region" description="Helical" evidence="2">
    <location>
        <begin position="145"/>
        <end position="167"/>
    </location>
</feature>
<feature type="transmembrane region" description="Helical" evidence="2">
    <location>
        <begin position="187"/>
        <end position="204"/>
    </location>
</feature>
<feature type="transmembrane region" description="Helical" evidence="2">
    <location>
        <begin position="211"/>
        <end position="233"/>
    </location>
</feature>
<feature type="transmembrane region" description="Helical" evidence="2">
    <location>
        <begin position="243"/>
        <end position="262"/>
    </location>
</feature>
<feature type="transmembrane region" description="Helical" evidence="2">
    <location>
        <begin position="269"/>
        <end position="291"/>
    </location>
</feature>
<feature type="transmembrane region" description="Helical" evidence="2">
    <location>
        <begin position="306"/>
        <end position="328"/>
    </location>
</feature>
<gene>
    <name type="primary">icaC</name>
    <name type="ordered locus">SAS2555</name>
</gene>
<reference key="1">
    <citation type="journal article" date="2004" name="Proc. Natl. Acad. Sci. U.S.A.">
        <title>Complete genomes of two clinical Staphylococcus aureus strains: evidence for the rapid evolution of virulence and drug resistance.</title>
        <authorList>
            <person name="Holden M.T.G."/>
            <person name="Feil E.J."/>
            <person name="Lindsay J.A."/>
            <person name="Peacock S.J."/>
            <person name="Day N.P.J."/>
            <person name="Enright M.C."/>
            <person name="Foster T.J."/>
            <person name="Moore C.E."/>
            <person name="Hurst L."/>
            <person name="Atkin R."/>
            <person name="Barron A."/>
            <person name="Bason N."/>
            <person name="Bentley S.D."/>
            <person name="Chillingworth C."/>
            <person name="Chillingworth T."/>
            <person name="Churcher C."/>
            <person name="Clark L."/>
            <person name="Corton C."/>
            <person name="Cronin A."/>
            <person name="Doggett J."/>
            <person name="Dowd L."/>
            <person name="Feltwell T."/>
            <person name="Hance Z."/>
            <person name="Harris B."/>
            <person name="Hauser H."/>
            <person name="Holroyd S."/>
            <person name="Jagels K."/>
            <person name="James K.D."/>
            <person name="Lennard N."/>
            <person name="Line A."/>
            <person name="Mayes R."/>
            <person name="Moule S."/>
            <person name="Mungall K."/>
            <person name="Ormond D."/>
            <person name="Quail M.A."/>
            <person name="Rabbinowitsch E."/>
            <person name="Rutherford K.M."/>
            <person name="Sanders M."/>
            <person name="Sharp S."/>
            <person name="Simmonds M."/>
            <person name="Stevens K."/>
            <person name="Whitehead S."/>
            <person name="Barrell B.G."/>
            <person name="Spratt B.G."/>
            <person name="Parkhill J."/>
        </authorList>
    </citation>
    <scope>NUCLEOTIDE SEQUENCE [LARGE SCALE GENOMIC DNA]</scope>
    <source>
        <strain>MSSA476</strain>
    </source>
</reference>